<name>TILS_PERMH</name>
<protein>
    <recommendedName>
        <fullName evidence="1">tRNA(Ile)-lysidine synthase</fullName>
        <ecNumber evidence="1">6.3.4.19</ecNumber>
    </recommendedName>
    <alternativeName>
        <fullName evidence="1">tRNA(Ile)-2-lysyl-cytidine synthase</fullName>
    </alternativeName>
    <alternativeName>
        <fullName evidence="1">tRNA(Ile)-lysidine synthetase</fullName>
    </alternativeName>
</protein>
<feature type="chain" id="PRO_1000164321" description="tRNA(Ile)-lysidine synthase">
    <location>
        <begin position="1"/>
        <end position="452"/>
    </location>
</feature>
<feature type="binding site" evidence="1">
    <location>
        <begin position="27"/>
        <end position="32"/>
    </location>
    <ligand>
        <name>ATP</name>
        <dbReference type="ChEBI" id="CHEBI:30616"/>
    </ligand>
</feature>
<sequence>MVEKKFLEAVKKYSLISEGDRILVAFSGGIDSTVLTYLLIKFRDHLKISDIYLAHLNHSLRKESDEDQRFCEDFAKKYGLEIFTKKVDIKSLAEKEKKSIEQKAREERYSFFRKVMEERSINRLATGHHLSDLVETMIMWFIQGNRKGIKGFRPKERDIIRPLYLINKDQIENYAREKGIEYRIDITNFETDFLRNRIRHNIIPHIKGINPSLEGSLLTLSYFLSLDDQYLEEESEKISQKFLNGKIELEELLVYDKALVYRAIQNWIYRKTGVYPSYRQIMDIMEIIEKKEGTKSIRLSPEYNLIRRYSTLYIEKVKEKTEPYQYRIKPGEKIFVKEANLYIKSYIETDYTLDKLKDERKKVCFQIESMEDAEFVVRNRRKGDRFIPFGRKKEKKLKDVMIDLKIPSDMRENIPLVVYGNKILWIAGYKRSAYFPVTEKGKKLICFELEEV</sequence>
<keyword id="KW-0067">ATP-binding</keyword>
<keyword id="KW-0963">Cytoplasm</keyword>
<keyword id="KW-0436">Ligase</keyword>
<keyword id="KW-0547">Nucleotide-binding</keyword>
<keyword id="KW-1185">Reference proteome</keyword>
<keyword id="KW-0819">tRNA processing</keyword>
<accession>C0QU23</accession>
<comment type="function">
    <text evidence="1">Ligates lysine onto the cytidine present at position 34 of the AUA codon-specific tRNA(Ile) that contains the anticodon CAU, in an ATP-dependent manner. Cytidine is converted to lysidine, thus changing the amino acid specificity of the tRNA from methionine to isoleucine.</text>
</comment>
<comment type="catalytic activity">
    <reaction evidence="1">
        <text>cytidine(34) in tRNA(Ile2) + L-lysine + ATP = lysidine(34) in tRNA(Ile2) + AMP + diphosphate + H(+)</text>
        <dbReference type="Rhea" id="RHEA:43744"/>
        <dbReference type="Rhea" id="RHEA-COMP:10625"/>
        <dbReference type="Rhea" id="RHEA-COMP:10670"/>
        <dbReference type="ChEBI" id="CHEBI:15378"/>
        <dbReference type="ChEBI" id="CHEBI:30616"/>
        <dbReference type="ChEBI" id="CHEBI:32551"/>
        <dbReference type="ChEBI" id="CHEBI:33019"/>
        <dbReference type="ChEBI" id="CHEBI:82748"/>
        <dbReference type="ChEBI" id="CHEBI:83665"/>
        <dbReference type="ChEBI" id="CHEBI:456215"/>
        <dbReference type="EC" id="6.3.4.19"/>
    </reaction>
</comment>
<comment type="subcellular location">
    <subcellularLocation>
        <location evidence="1">Cytoplasm</location>
    </subcellularLocation>
</comment>
<comment type="domain">
    <text>The N-terminal region contains the highly conserved SGGXDS motif, predicted to be a P-loop motif involved in ATP binding.</text>
</comment>
<comment type="similarity">
    <text evidence="1">Belongs to the tRNA(Ile)-lysidine synthase family.</text>
</comment>
<organism>
    <name type="scientific">Persephonella marina (strain DSM 14350 / EX-H1)</name>
    <dbReference type="NCBI Taxonomy" id="123214"/>
    <lineage>
        <taxon>Bacteria</taxon>
        <taxon>Pseudomonadati</taxon>
        <taxon>Aquificota</taxon>
        <taxon>Aquificia</taxon>
        <taxon>Aquificales</taxon>
        <taxon>Hydrogenothermaceae</taxon>
        <taxon>Persephonella</taxon>
    </lineage>
</organism>
<reference key="1">
    <citation type="journal article" date="2009" name="J. Bacteriol.">
        <title>Complete and draft genome sequences of six members of the Aquificales.</title>
        <authorList>
            <person name="Reysenbach A.-L."/>
            <person name="Hamamura N."/>
            <person name="Podar M."/>
            <person name="Griffiths E."/>
            <person name="Ferreira S."/>
            <person name="Hochstein R."/>
            <person name="Heidelberg J."/>
            <person name="Johnson J."/>
            <person name="Mead D."/>
            <person name="Pohorille A."/>
            <person name="Sarmiento M."/>
            <person name="Schweighofer K."/>
            <person name="Seshadri R."/>
            <person name="Voytek M.A."/>
        </authorList>
    </citation>
    <scope>NUCLEOTIDE SEQUENCE [LARGE SCALE GENOMIC DNA]</scope>
    <source>
        <strain>DSM 14350 / EX-H1</strain>
    </source>
</reference>
<proteinExistence type="inferred from homology"/>
<evidence type="ECO:0000255" key="1">
    <source>
        <dbReference type="HAMAP-Rule" id="MF_01161"/>
    </source>
</evidence>
<gene>
    <name evidence="1" type="primary">tilS</name>
    <name type="ordered locus">PERMA_0397</name>
</gene>
<dbReference type="EC" id="6.3.4.19" evidence="1"/>
<dbReference type="EMBL" id="CP001230">
    <property type="protein sequence ID" value="ACO04445.1"/>
    <property type="molecule type" value="Genomic_DNA"/>
</dbReference>
<dbReference type="RefSeq" id="WP_012676683.1">
    <property type="nucleotide sequence ID" value="NC_012440.1"/>
</dbReference>
<dbReference type="SMR" id="C0QU23"/>
<dbReference type="STRING" id="123214.PERMA_0397"/>
<dbReference type="PaxDb" id="123214-PERMA_0397"/>
<dbReference type="KEGG" id="pmx:PERMA_0397"/>
<dbReference type="eggNOG" id="COG0037">
    <property type="taxonomic scope" value="Bacteria"/>
</dbReference>
<dbReference type="HOGENOM" id="CLU_018869_0_1_0"/>
<dbReference type="OrthoDB" id="9807403at2"/>
<dbReference type="Proteomes" id="UP000001366">
    <property type="component" value="Chromosome"/>
</dbReference>
<dbReference type="GO" id="GO:0005737">
    <property type="term" value="C:cytoplasm"/>
    <property type="evidence" value="ECO:0007669"/>
    <property type="project" value="UniProtKB-SubCell"/>
</dbReference>
<dbReference type="GO" id="GO:0005524">
    <property type="term" value="F:ATP binding"/>
    <property type="evidence" value="ECO:0007669"/>
    <property type="project" value="UniProtKB-UniRule"/>
</dbReference>
<dbReference type="GO" id="GO:0032267">
    <property type="term" value="F:tRNA(Ile)-lysidine synthase activity"/>
    <property type="evidence" value="ECO:0007669"/>
    <property type="project" value="UniProtKB-EC"/>
</dbReference>
<dbReference type="GO" id="GO:0006400">
    <property type="term" value="P:tRNA modification"/>
    <property type="evidence" value="ECO:0007669"/>
    <property type="project" value="UniProtKB-UniRule"/>
</dbReference>
<dbReference type="CDD" id="cd01992">
    <property type="entry name" value="TilS_N"/>
    <property type="match status" value="1"/>
</dbReference>
<dbReference type="Gene3D" id="1.20.59.20">
    <property type="match status" value="1"/>
</dbReference>
<dbReference type="Gene3D" id="3.40.50.620">
    <property type="entry name" value="HUPs"/>
    <property type="match status" value="1"/>
</dbReference>
<dbReference type="HAMAP" id="MF_01161">
    <property type="entry name" value="tRNA_Ile_lys_synt"/>
    <property type="match status" value="1"/>
</dbReference>
<dbReference type="InterPro" id="IPR012796">
    <property type="entry name" value="Lysidine-tRNA-synth_C"/>
</dbReference>
<dbReference type="InterPro" id="IPR014729">
    <property type="entry name" value="Rossmann-like_a/b/a_fold"/>
</dbReference>
<dbReference type="InterPro" id="IPR011063">
    <property type="entry name" value="TilS/TtcA_N"/>
</dbReference>
<dbReference type="InterPro" id="IPR012094">
    <property type="entry name" value="tRNA_Ile_lys_synt"/>
</dbReference>
<dbReference type="InterPro" id="IPR012795">
    <property type="entry name" value="tRNA_Ile_lys_synt_N"/>
</dbReference>
<dbReference type="NCBIfam" id="TIGR02433">
    <property type="entry name" value="lysidine_TilS_C"/>
    <property type="match status" value="1"/>
</dbReference>
<dbReference type="NCBIfam" id="TIGR02432">
    <property type="entry name" value="lysidine_TilS_N"/>
    <property type="match status" value="1"/>
</dbReference>
<dbReference type="PANTHER" id="PTHR43033">
    <property type="entry name" value="TRNA(ILE)-LYSIDINE SYNTHASE-RELATED"/>
    <property type="match status" value="1"/>
</dbReference>
<dbReference type="PANTHER" id="PTHR43033:SF1">
    <property type="entry name" value="TRNA(ILE)-LYSIDINE SYNTHASE-RELATED"/>
    <property type="match status" value="1"/>
</dbReference>
<dbReference type="Pfam" id="PF01171">
    <property type="entry name" value="ATP_bind_3"/>
    <property type="match status" value="1"/>
</dbReference>
<dbReference type="Pfam" id="PF11734">
    <property type="entry name" value="TilS_C"/>
    <property type="match status" value="1"/>
</dbReference>
<dbReference type="SMART" id="SM00977">
    <property type="entry name" value="TilS_C"/>
    <property type="match status" value="1"/>
</dbReference>
<dbReference type="SUPFAM" id="SSF52402">
    <property type="entry name" value="Adenine nucleotide alpha hydrolases-like"/>
    <property type="match status" value="1"/>
</dbReference>
<dbReference type="SUPFAM" id="SSF82829">
    <property type="entry name" value="MesJ substrate recognition domain-like"/>
    <property type="match status" value="1"/>
</dbReference>
<dbReference type="SUPFAM" id="SSF56037">
    <property type="entry name" value="PheT/TilS domain"/>
    <property type="match status" value="1"/>
</dbReference>